<evidence type="ECO:0000250" key="1"/>
<evidence type="ECO:0000250" key="2">
    <source>
        <dbReference type="UniProtKB" id="Q2WG76"/>
    </source>
</evidence>
<evidence type="ECO:0000250" key="3">
    <source>
        <dbReference type="UniProtKB" id="Q2WG80"/>
    </source>
</evidence>
<evidence type="ECO:0000255" key="4"/>
<evidence type="ECO:0000256" key="5">
    <source>
        <dbReference type="SAM" id="MobiDB-lite"/>
    </source>
</evidence>
<evidence type="ECO:0000269" key="6">
    <source>
    </source>
</evidence>
<evidence type="ECO:0000269" key="7">
    <source>
    </source>
</evidence>
<evidence type="ECO:0000269" key="8">
    <source>
    </source>
</evidence>
<evidence type="ECO:0000303" key="9">
    <source>
    </source>
</evidence>
<evidence type="ECO:0000305" key="10"/>
<evidence type="ECO:0000312" key="11">
    <source>
        <dbReference type="EMBL" id="AAI30461.1"/>
    </source>
</evidence>
<evidence type="ECO:0000312" key="12">
    <source>
        <dbReference type="EMBL" id="AL139232"/>
    </source>
</evidence>
<evidence type="ECO:0000312" key="13">
    <source>
        <dbReference type="EMBL" id="EAW48651.1"/>
    </source>
</evidence>
<dbReference type="EMBL" id="AL139232">
    <property type="status" value="NOT_ANNOTATED_CDS"/>
    <property type="molecule type" value="Genomic_DNA"/>
</dbReference>
<dbReference type="EMBL" id="CH471051">
    <property type="protein sequence ID" value="EAW48651.1"/>
    <property type="molecule type" value="Genomic_DNA"/>
</dbReference>
<dbReference type="EMBL" id="BC130460">
    <property type="protein sequence ID" value="AAI30461.1"/>
    <property type="molecule type" value="mRNA"/>
</dbReference>
<dbReference type="EMBL" id="BC132968">
    <property type="protein sequence ID" value="AAI32969.1"/>
    <property type="molecule type" value="mRNA"/>
</dbReference>
<dbReference type="CCDS" id="CCDS34493.1">
    <molecule id="Q5TAB7-1"/>
</dbReference>
<dbReference type="RefSeq" id="NP_001009994.1">
    <molecule id="Q5TAB7-1"/>
    <property type="nucleotide sequence ID" value="NM_001009994.3"/>
</dbReference>
<dbReference type="BioGRID" id="126411">
    <property type="interactions" value="19"/>
</dbReference>
<dbReference type="FunCoup" id="Q5TAB7">
    <property type="interactions" value="427"/>
</dbReference>
<dbReference type="IntAct" id="Q5TAB7">
    <property type="interactions" value="24"/>
</dbReference>
<dbReference type="STRING" id="9606.ENSP00000358703"/>
<dbReference type="iPTMnet" id="Q5TAB7"/>
<dbReference type="PhosphoSitePlus" id="Q5TAB7"/>
<dbReference type="BioMuta" id="RIPPLY2"/>
<dbReference type="DMDM" id="74745808"/>
<dbReference type="MassIVE" id="Q5TAB7"/>
<dbReference type="PaxDb" id="9606-ENSP00000358703"/>
<dbReference type="Antibodypedia" id="57637">
    <property type="antibodies" value="60 antibodies from 9 providers"/>
</dbReference>
<dbReference type="DNASU" id="134701"/>
<dbReference type="Ensembl" id="ENST00000369687.2">
    <molecule id="Q5TAB7-2"/>
    <property type="protein sequence ID" value="ENSP00000358701.1"/>
    <property type="gene ID" value="ENSG00000203877.9"/>
</dbReference>
<dbReference type="Ensembl" id="ENST00000369689.6">
    <molecule id="Q5TAB7-1"/>
    <property type="protein sequence ID" value="ENSP00000358703.1"/>
    <property type="gene ID" value="ENSG00000203877.9"/>
</dbReference>
<dbReference type="GeneID" id="134701"/>
<dbReference type="KEGG" id="hsa:134701"/>
<dbReference type="MANE-Select" id="ENST00000369689.6">
    <property type="protein sequence ID" value="ENSP00000358703.1"/>
    <property type="RefSeq nucleotide sequence ID" value="NM_001009994.3"/>
    <property type="RefSeq protein sequence ID" value="NP_001009994.1"/>
</dbReference>
<dbReference type="UCSC" id="uc003pke.5">
    <molecule id="Q5TAB7-1"/>
    <property type="organism name" value="human"/>
</dbReference>
<dbReference type="AGR" id="HGNC:21390"/>
<dbReference type="CTD" id="134701"/>
<dbReference type="DisGeNET" id="134701"/>
<dbReference type="GeneCards" id="RIPPLY2"/>
<dbReference type="GeneReviews" id="RIPPLY2"/>
<dbReference type="HGNC" id="HGNC:21390">
    <property type="gene designation" value="RIPPLY2"/>
</dbReference>
<dbReference type="HPA" id="ENSG00000203877">
    <property type="expression patterns" value="Group enriched (brain, pituitary gland)"/>
</dbReference>
<dbReference type="MalaCards" id="RIPPLY2"/>
<dbReference type="MIM" id="609891">
    <property type="type" value="gene"/>
</dbReference>
<dbReference type="MIM" id="616566">
    <property type="type" value="phenotype"/>
</dbReference>
<dbReference type="neXtProt" id="NX_Q5TAB7"/>
<dbReference type="OpenTargets" id="ENSG00000203877"/>
<dbReference type="Orphanet" id="2311">
    <property type="disease" value="Autosomal recessive spondylocostal dysostosis"/>
</dbReference>
<dbReference type="PharmGKB" id="PA162401349"/>
<dbReference type="VEuPathDB" id="HostDB:ENSG00000203877"/>
<dbReference type="eggNOG" id="ENOG502S6U6">
    <property type="taxonomic scope" value="Eukaryota"/>
</dbReference>
<dbReference type="GeneTree" id="ENSGT00940000161538"/>
<dbReference type="HOGENOM" id="CLU_117697_1_1_1"/>
<dbReference type="InParanoid" id="Q5TAB7"/>
<dbReference type="OMA" id="AELTCEN"/>
<dbReference type="OrthoDB" id="5978888at2759"/>
<dbReference type="PAN-GO" id="Q5TAB7">
    <property type="GO annotations" value="3 GO annotations based on evolutionary models"/>
</dbReference>
<dbReference type="PhylomeDB" id="Q5TAB7"/>
<dbReference type="TreeFam" id="TF336045"/>
<dbReference type="PathwayCommons" id="Q5TAB7"/>
<dbReference type="Reactome" id="R-HSA-9824272">
    <property type="pathway name" value="Somitogenesis"/>
</dbReference>
<dbReference type="SignaLink" id="Q5TAB7"/>
<dbReference type="BioGRID-ORCS" id="134701">
    <property type="hits" value="5 hits in 1138 CRISPR screens"/>
</dbReference>
<dbReference type="ChiTaRS" id="RIPPLY2">
    <property type="organism name" value="human"/>
</dbReference>
<dbReference type="GenomeRNAi" id="134701"/>
<dbReference type="Pharos" id="Q5TAB7">
    <property type="development level" value="Tbio"/>
</dbReference>
<dbReference type="PRO" id="PR:Q5TAB7"/>
<dbReference type="Proteomes" id="UP000005640">
    <property type="component" value="Chromosome 6"/>
</dbReference>
<dbReference type="RNAct" id="Q5TAB7">
    <property type="molecule type" value="protein"/>
</dbReference>
<dbReference type="Bgee" id="ENSG00000203877">
    <property type="expression patterns" value="Expressed in cerebellar hemisphere and 113 other cell types or tissues"/>
</dbReference>
<dbReference type="GO" id="GO:0005634">
    <property type="term" value="C:nucleus"/>
    <property type="evidence" value="ECO:0000250"/>
    <property type="project" value="UniProtKB"/>
</dbReference>
<dbReference type="GO" id="GO:0060349">
    <property type="term" value="P:bone morphogenesis"/>
    <property type="evidence" value="ECO:0007669"/>
    <property type="project" value="Ensembl"/>
</dbReference>
<dbReference type="GO" id="GO:0007368">
    <property type="term" value="P:determination of left/right symmetry"/>
    <property type="evidence" value="ECO:0007669"/>
    <property type="project" value="Ensembl"/>
</dbReference>
<dbReference type="GO" id="GO:0009880">
    <property type="term" value="P:embryonic pattern specification"/>
    <property type="evidence" value="ECO:0000318"/>
    <property type="project" value="GO_Central"/>
</dbReference>
<dbReference type="GO" id="GO:0000122">
    <property type="term" value="P:negative regulation of transcription by RNA polymerase II"/>
    <property type="evidence" value="ECO:0000318"/>
    <property type="project" value="GO_Central"/>
</dbReference>
<dbReference type="GO" id="GO:0007219">
    <property type="term" value="P:Notch signaling pathway"/>
    <property type="evidence" value="ECO:0007669"/>
    <property type="project" value="Ensembl"/>
</dbReference>
<dbReference type="GO" id="GO:0001503">
    <property type="term" value="P:ossification"/>
    <property type="evidence" value="ECO:0007669"/>
    <property type="project" value="Ensembl"/>
</dbReference>
<dbReference type="GO" id="GO:0036342">
    <property type="term" value="P:post-anal tail morphogenesis"/>
    <property type="evidence" value="ECO:0007669"/>
    <property type="project" value="Ensembl"/>
</dbReference>
<dbReference type="GO" id="GO:0032525">
    <property type="term" value="P:somite rostral/caudal axis specification"/>
    <property type="evidence" value="ECO:0000250"/>
    <property type="project" value="UniProtKB"/>
</dbReference>
<dbReference type="GO" id="GO:0001756">
    <property type="term" value="P:somitogenesis"/>
    <property type="evidence" value="ECO:0000250"/>
    <property type="project" value="UniProtKB"/>
</dbReference>
<dbReference type="InterPro" id="IPR028127">
    <property type="entry name" value="Ripply_fam"/>
</dbReference>
<dbReference type="PANTHER" id="PTHR16770">
    <property type="entry name" value="PROTEIN RIPPLY-LIKE"/>
    <property type="match status" value="1"/>
</dbReference>
<dbReference type="PANTHER" id="PTHR16770:SF3">
    <property type="entry name" value="PROTEIN RIPPLY2"/>
    <property type="match status" value="1"/>
</dbReference>
<dbReference type="Pfam" id="PF14998">
    <property type="entry name" value="Ripply"/>
    <property type="match status" value="1"/>
</dbReference>
<keyword id="KW-0025">Alternative splicing</keyword>
<keyword id="KW-0217">Developmental protein</keyword>
<keyword id="KW-0242">Dwarfism</keyword>
<keyword id="KW-0539">Nucleus</keyword>
<keyword id="KW-1267">Proteomics identification</keyword>
<keyword id="KW-1185">Reference proteome</keyword>
<sequence>MENAGGAEGTESGAAACAATDGPTRRAGADSGYAGFWRPWVDAGGKKEEETPNHAAEAMPDGPGMTAASGKLYQFRHPVRLFWPKSKCYDYLYQEAEALLKNFPIQATISFYEDSDSEDEIEDLTCEN</sequence>
<reference evidence="12" key="1">
    <citation type="journal article" date="2003" name="Nature">
        <title>The DNA sequence and analysis of human chromosome 6.</title>
        <authorList>
            <person name="Mungall A.J."/>
            <person name="Palmer S.A."/>
            <person name="Sims S.K."/>
            <person name="Edwards C.A."/>
            <person name="Ashurst J.L."/>
            <person name="Wilming L."/>
            <person name="Jones M.C."/>
            <person name="Horton R."/>
            <person name="Hunt S.E."/>
            <person name="Scott C.E."/>
            <person name="Gilbert J.G.R."/>
            <person name="Clamp M.E."/>
            <person name="Bethel G."/>
            <person name="Milne S."/>
            <person name="Ainscough R."/>
            <person name="Almeida J.P."/>
            <person name="Ambrose K.D."/>
            <person name="Andrews T.D."/>
            <person name="Ashwell R.I.S."/>
            <person name="Babbage A.K."/>
            <person name="Bagguley C.L."/>
            <person name="Bailey J."/>
            <person name="Banerjee R."/>
            <person name="Barker D.J."/>
            <person name="Barlow K.F."/>
            <person name="Bates K."/>
            <person name="Beare D.M."/>
            <person name="Beasley H."/>
            <person name="Beasley O."/>
            <person name="Bird C.P."/>
            <person name="Blakey S.E."/>
            <person name="Bray-Allen S."/>
            <person name="Brook J."/>
            <person name="Brown A.J."/>
            <person name="Brown J.Y."/>
            <person name="Burford D.C."/>
            <person name="Burrill W."/>
            <person name="Burton J."/>
            <person name="Carder C."/>
            <person name="Carter N.P."/>
            <person name="Chapman J.C."/>
            <person name="Clark S.Y."/>
            <person name="Clark G."/>
            <person name="Clee C.M."/>
            <person name="Clegg S."/>
            <person name="Cobley V."/>
            <person name="Collier R.E."/>
            <person name="Collins J.E."/>
            <person name="Colman L.K."/>
            <person name="Corby N.R."/>
            <person name="Coville G.J."/>
            <person name="Culley K.M."/>
            <person name="Dhami P."/>
            <person name="Davies J."/>
            <person name="Dunn M."/>
            <person name="Earthrowl M.E."/>
            <person name="Ellington A.E."/>
            <person name="Evans K.A."/>
            <person name="Faulkner L."/>
            <person name="Francis M.D."/>
            <person name="Frankish A."/>
            <person name="Frankland J."/>
            <person name="French L."/>
            <person name="Garner P."/>
            <person name="Garnett J."/>
            <person name="Ghori M.J."/>
            <person name="Gilby L.M."/>
            <person name="Gillson C.J."/>
            <person name="Glithero R.J."/>
            <person name="Grafham D.V."/>
            <person name="Grant M."/>
            <person name="Gribble S."/>
            <person name="Griffiths C."/>
            <person name="Griffiths M.N.D."/>
            <person name="Hall R."/>
            <person name="Halls K.S."/>
            <person name="Hammond S."/>
            <person name="Harley J.L."/>
            <person name="Hart E.A."/>
            <person name="Heath P.D."/>
            <person name="Heathcott R."/>
            <person name="Holmes S.J."/>
            <person name="Howden P.J."/>
            <person name="Howe K.L."/>
            <person name="Howell G.R."/>
            <person name="Huckle E."/>
            <person name="Humphray S.J."/>
            <person name="Humphries M.D."/>
            <person name="Hunt A.R."/>
            <person name="Johnson C.M."/>
            <person name="Joy A.A."/>
            <person name="Kay M."/>
            <person name="Keenan S.J."/>
            <person name="Kimberley A.M."/>
            <person name="King A."/>
            <person name="Laird G.K."/>
            <person name="Langford C."/>
            <person name="Lawlor S."/>
            <person name="Leongamornlert D.A."/>
            <person name="Leversha M."/>
            <person name="Lloyd C.R."/>
            <person name="Lloyd D.M."/>
            <person name="Loveland J.E."/>
            <person name="Lovell J."/>
            <person name="Martin S."/>
            <person name="Mashreghi-Mohammadi M."/>
            <person name="Maslen G.L."/>
            <person name="Matthews L."/>
            <person name="McCann O.T."/>
            <person name="McLaren S.J."/>
            <person name="McLay K."/>
            <person name="McMurray A."/>
            <person name="Moore M.J.F."/>
            <person name="Mullikin J.C."/>
            <person name="Niblett D."/>
            <person name="Nickerson T."/>
            <person name="Novik K.L."/>
            <person name="Oliver K."/>
            <person name="Overton-Larty E.K."/>
            <person name="Parker A."/>
            <person name="Patel R."/>
            <person name="Pearce A.V."/>
            <person name="Peck A.I."/>
            <person name="Phillimore B.J.C.T."/>
            <person name="Phillips S."/>
            <person name="Plumb R.W."/>
            <person name="Porter K.M."/>
            <person name="Ramsey Y."/>
            <person name="Ranby S.A."/>
            <person name="Rice C.M."/>
            <person name="Ross M.T."/>
            <person name="Searle S.M."/>
            <person name="Sehra H.K."/>
            <person name="Sheridan E."/>
            <person name="Skuce C.D."/>
            <person name="Smith S."/>
            <person name="Smith M."/>
            <person name="Spraggon L."/>
            <person name="Squares S.L."/>
            <person name="Steward C.A."/>
            <person name="Sycamore N."/>
            <person name="Tamlyn-Hall G."/>
            <person name="Tester J."/>
            <person name="Theaker A.J."/>
            <person name="Thomas D.W."/>
            <person name="Thorpe A."/>
            <person name="Tracey A."/>
            <person name="Tromans A."/>
            <person name="Tubby B."/>
            <person name="Wall M."/>
            <person name="Wallis J.M."/>
            <person name="West A.P."/>
            <person name="White S.S."/>
            <person name="Whitehead S.L."/>
            <person name="Whittaker H."/>
            <person name="Wild A."/>
            <person name="Willey D.J."/>
            <person name="Wilmer T.E."/>
            <person name="Wood J.M."/>
            <person name="Wray P.W."/>
            <person name="Wyatt J.C."/>
            <person name="Young L."/>
            <person name="Younger R.M."/>
            <person name="Bentley D.R."/>
            <person name="Coulson A."/>
            <person name="Durbin R.M."/>
            <person name="Hubbard T."/>
            <person name="Sulston J.E."/>
            <person name="Dunham I."/>
            <person name="Rogers J."/>
            <person name="Beck S."/>
        </authorList>
    </citation>
    <scope>NUCLEOTIDE SEQUENCE [LARGE SCALE GENOMIC DNA]</scope>
</reference>
<reference evidence="13" key="2">
    <citation type="submission" date="2005-09" db="EMBL/GenBank/DDBJ databases">
        <authorList>
            <person name="Mural R.J."/>
            <person name="Istrail S."/>
            <person name="Sutton G.G."/>
            <person name="Florea L."/>
            <person name="Halpern A.L."/>
            <person name="Mobarry C.M."/>
            <person name="Lippert R."/>
            <person name="Walenz B."/>
            <person name="Shatkay H."/>
            <person name="Dew I."/>
            <person name="Miller J.R."/>
            <person name="Flanigan M.J."/>
            <person name="Edwards N.J."/>
            <person name="Bolanos R."/>
            <person name="Fasulo D."/>
            <person name="Halldorsson B.V."/>
            <person name="Hannenhalli S."/>
            <person name="Turner R."/>
            <person name="Yooseph S."/>
            <person name="Lu F."/>
            <person name="Nusskern D.R."/>
            <person name="Shue B.C."/>
            <person name="Zheng X.H."/>
            <person name="Zhong F."/>
            <person name="Delcher A.L."/>
            <person name="Huson D.H."/>
            <person name="Kravitz S.A."/>
            <person name="Mouchard L."/>
            <person name="Reinert K."/>
            <person name="Remington K.A."/>
            <person name="Clark A.G."/>
            <person name="Waterman M.S."/>
            <person name="Eichler E.E."/>
            <person name="Adams M.D."/>
            <person name="Hunkapiller M.W."/>
            <person name="Myers E.W."/>
            <person name="Venter J.C."/>
        </authorList>
    </citation>
    <scope>NUCLEOTIDE SEQUENCE [LARGE SCALE GENOMIC DNA]</scope>
</reference>
<reference evidence="10 11" key="3">
    <citation type="journal article" date="2004" name="Genome Res.">
        <title>The status, quality, and expansion of the NIH full-length cDNA project: the Mammalian Gene Collection (MGC).</title>
        <authorList>
            <consortium name="The MGC Project Team"/>
        </authorList>
    </citation>
    <scope>NUCLEOTIDE SEQUENCE [LARGE SCALE MRNA] (ISOFORM 1)</scope>
    <source>
        <tissue evidence="11">Brain</tissue>
    </source>
</reference>
<reference evidence="10" key="4">
    <citation type="journal article" date="2005" name="Dev. Cell">
        <title>Groucho-associated transcriptional repressor ripply1 is required for proper transition from the presomitic mesoderm to somites.</title>
        <authorList>
            <person name="Kawamura A."/>
            <person name="Koshida S."/>
            <person name="Hijikata H."/>
            <person name="Ohbayashi A."/>
            <person name="Kondoh H."/>
            <person name="Takada S."/>
        </authorList>
    </citation>
    <scope>IDENTIFICATION AS RIPPLY2</scope>
</reference>
<reference key="5">
    <citation type="journal article" date="2015" name="Hum. Mol. Genet.">
        <title>Compound heterozygous mutations in RIPPLY2 associated with vertebral segmentation defects.</title>
        <authorList>
            <person name="McInerney-Leo A.M."/>
            <person name="Sparrow D.B."/>
            <person name="Harris J.E."/>
            <person name="Gardiner B.B."/>
            <person name="Marshall M.S."/>
            <person name="O'Reilly V.C."/>
            <person name="Shi H."/>
            <person name="Brown M.A."/>
            <person name="Leo P.J."/>
            <person name="Zankl A."/>
            <person name="Dunwoodie S.L."/>
            <person name="Duncan E.L."/>
        </authorList>
    </citation>
    <scope>INVOLVEMENT IN SCDO6</scope>
</reference>
<gene>
    <name type="primary">RIPPLY2</name>
    <name type="synonym">C6orf159</name>
</gene>
<protein>
    <recommendedName>
        <fullName>Protein ripply2</fullName>
    </recommendedName>
</protein>
<organism>
    <name type="scientific">Homo sapiens</name>
    <name type="common">Human</name>
    <dbReference type="NCBI Taxonomy" id="9606"/>
    <lineage>
        <taxon>Eukaryota</taxon>
        <taxon>Metazoa</taxon>
        <taxon>Chordata</taxon>
        <taxon>Craniata</taxon>
        <taxon>Vertebrata</taxon>
        <taxon>Euteleostomi</taxon>
        <taxon>Mammalia</taxon>
        <taxon>Eutheria</taxon>
        <taxon>Euarchontoglires</taxon>
        <taxon>Primates</taxon>
        <taxon>Haplorrhini</taxon>
        <taxon>Catarrhini</taxon>
        <taxon>Hominidae</taxon>
        <taxon>Homo</taxon>
    </lineage>
</organism>
<name>RIPP2_HUMAN</name>
<feature type="chain" id="PRO_0000307759" description="Protein ripply2">
    <location>
        <begin position="1"/>
        <end position="128"/>
    </location>
</feature>
<feature type="region of interest" description="Disordered" evidence="5">
    <location>
        <begin position="1"/>
        <end position="63"/>
    </location>
</feature>
<feature type="region of interest" description="Ripply homology domain" evidence="4">
    <location>
        <begin position="77"/>
        <end position="112"/>
    </location>
</feature>
<feature type="short sequence motif" description="WRPW motif" evidence="4">
    <location>
        <begin position="37"/>
        <end position="40"/>
    </location>
</feature>
<feature type="compositionally biased region" description="Low complexity" evidence="5">
    <location>
        <begin position="9"/>
        <end position="22"/>
    </location>
</feature>
<feature type="splice variant" id="VSP_052556" description="In isoform 2." evidence="9">
    <location>
        <begin position="1"/>
        <end position="58"/>
    </location>
</feature>
<comment type="function">
    <text evidence="2">Plays a role in somitogenesis. Required for somite segregation and establishment of rostrocaudal polarity in somites (By similarity).</text>
</comment>
<comment type="interaction">
    <interactant intactId="EBI-10246897">
        <id>Q5TAB7</id>
    </interactant>
    <interactant intactId="EBI-8640233">
        <id>Q5T686</id>
        <label>AVPI1</label>
    </interactant>
    <organismsDiffer>false</organismsDiffer>
    <experiments>3</experiments>
</comment>
<comment type="interaction">
    <interactant intactId="EBI-10246897">
        <id>Q5TAB7</id>
    </interactant>
    <interactant intactId="EBI-18036948">
        <id>Q3SXR2</id>
        <label>C3orf36</label>
    </interactant>
    <organismsDiffer>false</organismsDiffer>
    <experiments>3</experiments>
</comment>
<comment type="interaction">
    <interactant intactId="EBI-10246897">
        <id>Q5TAB7</id>
    </interactant>
    <interactant intactId="EBI-21603100">
        <id>P26378-2</id>
        <label>ELAVL4</label>
    </interactant>
    <organismsDiffer>false</organismsDiffer>
    <experiments>3</experiments>
</comment>
<comment type="interaction">
    <interactant intactId="EBI-10246897">
        <id>Q5TAB7</id>
    </interactant>
    <interactant intactId="EBI-712073">
        <id>Q8NBJ4</id>
        <label>GOLM1</label>
    </interactant>
    <organismsDiffer>false</organismsDiffer>
    <experiments>3</experiments>
</comment>
<comment type="interaction">
    <interactant intactId="EBI-10246897">
        <id>Q5TAB7</id>
    </interactant>
    <interactant intactId="EBI-466029">
        <id>P42858</id>
        <label>HTT</label>
    </interactant>
    <organismsDiffer>false</organismsDiffer>
    <experiments>6</experiments>
</comment>
<comment type="interaction">
    <interactant intactId="EBI-10246897">
        <id>Q5TAB7</id>
    </interactant>
    <interactant intactId="EBI-749265">
        <id>Q8N6L0</id>
        <label>KASH5</label>
    </interactant>
    <organismsDiffer>false</organismsDiffer>
    <experiments>8</experiments>
</comment>
<comment type="interaction">
    <interactant intactId="EBI-10246897">
        <id>Q5TAB7</id>
    </interactant>
    <interactant intactId="EBI-1246238">
        <id>P17568</id>
        <label>NDUFB7</label>
    </interactant>
    <organismsDiffer>false</organismsDiffer>
    <experiments>3</experiments>
</comment>
<comment type="interaction">
    <interactant intactId="EBI-10246897">
        <id>Q5TAB7</id>
    </interactant>
    <interactant intactId="EBI-348489">
        <id>P40425</id>
        <label>PBX2</label>
    </interactant>
    <organismsDiffer>false</organismsDiffer>
    <experiments>5</experiments>
</comment>
<comment type="interaction">
    <interactant intactId="EBI-10246897">
        <id>Q5TAB7</id>
    </interactant>
    <interactant intactId="EBI-10302990">
        <id>Q9BYU1</id>
        <label>PBX4</label>
    </interactant>
    <organismsDiffer>false</organismsDiffer>
    <experiments>5</experiments>
</comment>
<comment type="interaction">
    <interactant intactId="EBI-10246897">
        <id>Q5TAB7</id>
    </interactant>
    <interactant intactId="EBI-5235340">
        <id>Q7Z699</id>
        <label>SPRED1</label>
    </interactant>
    <organismsDiffer>false</organismsDiffer>
    <experiments>3</experiments>
</comment>
<comment type="interaction">
    <interactant intactId="EBI-10246897">
        <id>Q5TAB7</id>
    </interactant>
    <interactant intactId="EBI-7131783">
        <id>Q8N205</id>
        <label>SYNE4</label>
    </interactant>
    <organismsDiffer>false</organismsDiffer>
    <experiments>3</experiments>
</comment>
<comment type="interaction">
    <interactant intactId="EBI-10246897">
        <id>Q5TAB7</id>
    </interactant>
    <interactant intactId="EBI-10246902">
        <id>Q05BK6</id>
        <label>TFG</label>
    </interactant>
    <organismsDiffer>false</organismsDiffer>
    <experiments>3</experiments>
</comment>
<comment type="subcellular location">
    <subcellularLocation>
        <location evidence="3">Nucleus</location>
    </subcellularLocation>
</comment>
<comment type="alternative products">
    <event type="alternative splicing"/>
    <isoform>
        <id>Q5TAB7-1</id>
        <name evidence="6 7">1</name>
        <sequence type="displayed"/>
    </isoform>
    <isoform>
        <id>Q5TAB7-2</id>
        <name evidence="6">2</name>
        <sequence type="described" ref="VSP_052556"/>
    </isoform>
</comment>
<comment type="domain">
    <text evidence="1">The ripply homology domain is required for transcriptional repression.</text>
</comment>
<comment type="domain">
    <text evidence="3">The WRPW motif is required for binding to tle/groucho proteins.</text>
</comment>
<comment type="disease" evidence="8">
    <disease id="DI-04516">
        <name>Spondylocostal dysostosis 6, autosomal recessive</name>
        <acronym>SCDO6</acronym>
        <description>A form of spondylocostal dysostosis, a condition of variable severity associated with vertebral and rib segmentation defects. The main skeletal malformations include fusion of vertebrae, hemivertebrae, fusion of certain ribs, and other rib malformations. Deformity of the chest and spine (severe scoliosis, kyphoscoliosis and lordosis) is a natural consequence of the malformation and leads to a dwarf-like appearance. As the thorax is small, infants frequently have respiratory insufficiency and repeated respiratory infections resulting in life-threatening complications in the first year of life.</description>
        <dbReference type="MIM" id="616566"/>
    </disease>
    <text>The disease is caused by variants affecting the gene represented in this entry.</text>
</comment>
<comment type="similarity">
    <text evidence="10">Belongs to the ripply family.</text>
</comment>
<proteinExistence type="evidence at protein level"/>
<accession>Q5TAB7</accession>
<accession>Q5TAB6</accession>